<reference key="1">
    <citation type="journal article" date="2000" name="Nature">
        <title>The genome sequence of the food-borne pathogen Campylobacter jejuni reveals hypervariable sequences.</title>
        <authorList>
            <person name="Parkhill J."/>
            <person name="Wren B.W."/>
            <person name="Mungall K.L."/>
            <person name="Ketley J.M."/>
            <person name="Churcher C.M."/>
            <person name="Basham D."/>
            <person name="Chillingworth T."/>
            <person name="Davies R.M."/>
            <person name="Feltwell T."/>
            <person name="Holroyd S."/>
            <person name="Jagels K."/>
            <person name="Karlyshev A.V."/>
            <person name="Moule S."/>
            <person name="Pallen M.J."/>
            <person name="Penn C.W."/>
            <person name="Quail M.A."/>
            <person name="Rajandream M.A."/>
            <person name="Rutherford K.M."/>
            <person name="van Vliet A.H.M."/>
            <person name="Whitehead S."/>
            <person name="Barrell B.G."/>
        </authorList>
    </citation>
    <scope>NUCLEOTIDE SEQUENCE [LARGE SCALE GENOMIC DNA]</scope>
    <source>
        <strain>ATCC 700819 / NCTC 11168</strain>
    </source>
</reference>
<reference evidence="2" key="2">
    <citation type="submission" date="2010-10" db="PDB data bank">
        <title>NH3-dependent NAD synthetase from Campylobacter jejuni subsp. jejuni NCTC 11168 in complex with the nitrate ion.</title>
        <authorList>
            <person name="Filippova E.V."/>
            <person name="Wawrzak Z."/>
            <person name="Onopriyenko O."/>
            <person name="Skarina T."/>
            <person name="Edwards A."/>
            <person name="Savchenko A."/>
            <person name="Anderson W.F."/>
        </authorList>
    </citation>
    <scope>X-RAY CRYSTALLOGRAPHY (2.74 ANGSTROMS)</scope>
    <source>
        <strain>ATCC 700819 / NCTC 11168</strain>
    </source>
</reference>
<feature type="chain" id="PRO_0000152162" description="NH(3)-dependent NAD(+) synthetase">
    <location>
        <begin position="1"/>
        <end position="246"/>
    </location>
</feature>
<feature type="binding site" evidence="1">
    <location>
        <begin position="29"/>
        <end position="36"/>
    </location>
    <ligand>
        <name>ATP</name>
        <dbReference type="ChEBI" id="CHEBI:30616"/>
    </ligand>
</feature>
<feature type="binding site" evidence="1">
    <location>
        <position position="35"/>
    </location>
    <ligand>
        <name>Mg(2+)</name>
        <dbReference type="ChEBI" id="CHEBI:18420"/>
    </ligand>
</feature>
<feature type="binding site" evidence="1">
    <location>
        <position position="110"/>
    </location>
    <ligand>
        <name>deamido-NAD(+)</name>
        <dbReference type="ChEBI" id="CHEBI:58437"/>
    </ligand>
</feature>
<feature type="binding site" evidence="1">
    <location>
        <position position="130"/>
    </location>
    <ligand>
        <name>ATP</name>
        <dbReference type="ChEBI" id="CHEBI:30616"/>
    </ligand>
</feature>
<feature type="binding site" evidence="1">
    <location>
        <position position="135"/>
    </location>
    <ligand>
        <name>Mg(2+)</name>
        <dbReference type="ChEBI" id="CHEBI:18420"/>
    </ligand>
</feature>
<feature type="binding site" evidence="1">
    <location>
        <position position="159"/>
    </location>
    <ligand>
        <name>ATP</name>
        <dbReference type="ChEBI" id="CHEBI:30616"/>
    </ligand>
</feature>
<feature type="binding site" evidence="1">
    <location>
        <position position="181"/>
    </location>
    <ligand>
        <name>ATP</name>
        <dbReference type="ChEBI" id="CHEBI:30616"/>
    </ligand>
</feature>
<feature type="helix" evidence="3">
    <location>
        <begin position="3"/>
        <end position="19"/>
    </location>
</feature>
<feature type="strand" evidence="3">
    <location>
        <begin position="24"/>
        <end position="29"/>
    </location>
</feature>
<feature type="helix" evidence="3">
    <location>
        <begin position="34"/>
        <end position="47"/>
    </location>
</feature>
<feature type="strand" evidence="3">
    <location>
        <begin position="50"/>
        <end position="55"/>
    </location>
</feature>
<feature type="helix" evidence="3">
    <location>
        <begin position="64"/>
        <end position="76"/>
    </location>
</feature>
<feature type="strand" evidence="3">
    <location>
        <begin position="79"/>
        <end position="82"/>
    </location>
</feature>
<feature type="helix" evidence="3">
    <location>
        <begin position="86"/>
        <end position="93"/>
    </location>
</feature>
<feature type="helix" evidence="3">
    <location>
        <begin position="101"/>
        <end position="122"/>
    </location>
</feature>
<feature type="strand" evidence="3">
    <location>
        <begin position="125"/>
        <end position="128"/>
    </location>
</feature>
<feature type="helix" evidence="3">
    <location>
        <begin position="133"/>
        <end position="138"/>
    </location>
</feature>
<feature type="turn" evidence="3">
    <location>
        <begin position="143"/>
        <end position="147"/>
    </location>
</feature>
<feature type="strand" evidence="3">
    <location>
        <begin position="150"/>
        <end position="152"/>
    </location>
</feature>
<feature type="turn" evidence="3">
    <location>
        <begin position="153"/>
        <end position="156"/>
    </location>
</feature>
<feature type="helix" evidence="3">
    <location>
        <begin position="159"/>
        <end position="168"/>
    </location>
</feature>
<feature type="helix" evidence="3">
    <location>
        <begin position="173"/>
        <end position="177"/>
    </location>
</feature>
<feature type="helix" evidence="3">
    <location>
        <begin position="200"/>
        <end position="209"/>
    </location>
</feature>
<feature type="helix" evidence="3">
    <location>
        <begin position="213"/>
        <end position="218"/>
    </location>
</feature>
<feature type="helix" evidence="3">
    <location>
        <begin position="221"/>
        <end position="233"/>
    </location>
</feature>
<feature type="helix" evidence="3">
    <location>
        <begin position="235"/>
        <end position="238"/>
    </location>
</feature>
<accession>Q9PPB0</accession>
<accession>Q0PA80</accession>
<protein>
    <recommendedName>
        <fullName evidence="1">NH(3)-dependent NAD(+) synthetase</fullName>
        <ecNumber evidence="1">6.3.1.5</ecNumber>
    </recommendedName>
</protein>
<keyword id="KW-0002">3D-structure</keyword>
<keyword id="KW-0067">ATP-binding</keyword>
<keyword id="KW-0436">Ligase</keyword>
<keyword id="KW-0460">Magnesium</keyword>
<keyword id="KW-0479">Metal-binding</keyword>
<keyword id="KW-0520">NAD</keyword>
<keyword id="KW-0547">Nucleotide-binding</keyword>
<keyword id="KW-1185">Reference proteome</keyword>
<proteinExistence type="evidence at protein level"/>
<dbReference type="EC" id="6.3.1.5" evidence="1"/>
<dbReference type="EMBL" id="AL111168">
    <property type="protein sequence ID" value="CAL34938.1"/>
    <property type="molecule type" value="Genomic_DNA"/>
</dbReference>
<dbReference type="PIR" id="B81353">
    <property type="entry name" value="B81353"/>
</dbReference>
<dbReference type="RefSeq" id="WP_002852555.1">
    <property type="nucleotide sequence ID" value="NZ_SZUC01000001.1"/>
</dbReference>
<dbReference type="RefSeq" id="YP_002344217.1">
    <property type="nucleotide sequence ID" value="NC_002163.1"/>
</dbReference>
<dbReference type="PDB" id="3P52">
    <property type="method" value="X-ray"/>
    <property type="resolution" value="2.74 A"/>
    <property type="chains" value="A/B=1-246"/>
</dbReference>
<dbReference type="PDBsum" id="3P52"/>
<dbReference type="SMR" id="Q9PPB0"/>
<dbReference type="IntAct" id="Q9PPB0">
    <property type="interactions" value="40"/>
</dbReference>
<dbReference type="STRING" id="192222.Cj0810"/>
<dbReference type="PaxDb" id="192222-Cj0810"/>
<dbReference type="EnsemblBacteria" id="CAL34938">
    <property type="protein sequence ID" value="CAL34938"/>
    <property type="gene ID" value="Cj0810"/>
</dbReference>
<dbReference type="GeneID" id="906011"/>
<dbReference type="KEGG" id="cje:Cj0810"/>
<dbReference type="PATRIC" id="fig|192222.6.peg.798"/>
<dbReference type="eggNOG" id="COG0171">
    <property type="taxonomic scope" value="Bacteria"/>
</dbReference>
<dbReference type="HOGENOM" id="CLU_059327_1_2_7"/>
<dbReference type="OrthoDB" id="9799210at2"/>
<dbReference type="UniPathway" id="UPA00253">
    <property type="reaction ID" value="UER00333"/>
</dbReference>
<dbReference type="EvolutionaryTrace" id="Q9PPB0"/>
<dbReference type="Proteomes" id="UP000000799">
    <property type="component" value="Chromosome"/>
</dbReference>
<dbReference type="GO" id="GO:0005737">
    <property type="term" value="C:cytoplasm"/>
    <property type="evidence" value="ECO:0007669"/>
    <property type="project" value="InterPro"/>
</dbReference>
<dbReference type="GO" id="GO:0005524">
    <property type="term" value="F:ATP binding"/>
    <property type="evidence" value="ECO:0007669"/>
    <property type="project" value="UniProtKB-UniRule"/>
</dbReference>
<dbReference type="GO" id="GO:0004359">
    <property type="term" value="F:glutaminase activity"/>
    <property type="evidence" value="ECO:0007669"/>
    <property type="project" value="InterPro"/>
</dbReference>
<dbReference type="GO" id="GO:0046872">
    <property type="term" value="F:metal ion binding"/>
    <property type="evidence" value="ECO:0007669"/>
    <property type="project" value="UniProtKB-KW"/>
</dbReference>
<dbReference type="GO" id="GO:0003952">
    <property type="term" value="F:NAD+ synthase (glutamine-hydrolyzing) activity"/>
    <property type="evidence" value="ECO:0007669"/>
    <property type="project" value="InterPro"/>
</dbReference>
<dbReference type="GO" id="GO:0008795">
    <property type="term" value="F:NAD+ synthase activity"/>
    <property type="evidence" value="ECO:0007669"/>
    <property type="project" value="UniProtKB-UniRule"/>
</dbReference>
<dbReference type="GO" id="GO:0009435">
    <property type="term" value="P:NAD biosynthetic process"/>
    <property type="evidence" value="ECO:0007669"/>
    <property type="project" value="UniProtKB-UniRule"/>
</dbReference>
<dbReference type="CDD" id="cd00553">
    <property type="entry name" value="NAD_synthase"/>
    <property type="match status" value="1"/>
</dbReference>
<dbReference type="FunFam" id="3.40.50.620:FF:000106">
    <property type="entry name" value="Glutamine-dependent NAD(+) synthetase"/>
    <property type="match status" value="1"/>
</dbReference>
<dbReference type="Gene3D" id="3.40.50.620">
    <property type="entry name" value="HUPs"/>
    <property type="match status" value="1"/>
</dbReference>
<dbReference type="HAMAP" id="MF_00193">
    <property type="entry name" value="NadE_ammonia_dep"/>
    <property type="match status" value="1"/>
</dbReference>
<dbReference type="InterPro" id="IPR022310">
    <property type="entry name" value="NAD/GMP_synthase"/>
</dbReference>
<dbReference type="InterPro" id="IPR003694">
    <property type="entry name" value="NAD_synthase"/>
</dbReference>
<dbReference type="InterPro" id="IPR022926">
    <property type="entry name" value="NH(3)-dep_NAD(+)_synth"/>
</dbReference>
<dbReference type="InterPro" id="IPR014729">
    <property type="entry name" value="Rossmann-like_a/b/a_fold"/>
</dbReference>
<dbReference type="NCBIfam" id="TIGR00552">
    <property type="entry name" value="nadE"/>
    <property type="match status" value="1"/>
</dbReference>
<dbReference type="NCBIfam" id="NF010587">
    <property type="entry name" value="PRK13980.1"/>
    <property type="match status" value="1"/>
</dbReference>
<dbReference type="PANTHER" id="PTHR23090:SF9">
    <property type="entry name" value="GLUTAMINE-DEPENDENT NAD(+) SYNTHETASE"/>
    <property type="match status" value="1"/>
</dbReference>
<dbReference type="PANTHER" id="PTHR23090">
    <property type="entry name" value="NH 3 /GLUTAMINE-DEPENDENT NAD + SYNTHETASE"/>
    <property type="match status" value="1"/>
</dbReference>
<dbReference type="Pfam" id="PF02540">
    <property type="entry name" value="NAD_synthase"/>
    <property type="match status" value="1"/>
</dbReference>
<dbReference type="SUPFAM" id="SSF52402">
    <property type="entry name" value="Adenine nucleotide alpha hydrolases-like"/>
    <property type="match status" value="1"/>
</dbReference>
<name>NADE_CAMJE</name>
<gene>
    <name evidence="1" type="primary">nadE</name>
    <name type="ordered locus">Cj0810</name>
</gene>
<organism>
    <name type="scientific">Campylobacter jejuni subsp. jejuni serotype O:2 (strain ATCC 700819 / NCTC 11168)</name>
    <dbReference type="NCBI Taxonomy" id="192222"/>
    <lineage>
        <taxon>Bacteria</taxon>
        <taxon>Pseudomonadati</taxon>
        <taxon>Campylobacterota</taxon>
        <taxon>Epsilonproteobacteria</taxon>
        <taxon>Campylobacterales</taxon>
        <taxon>Campylobacteraceae</taxon>
        <taxon>Campylobacter</taxon>
    </lineage>
</organism>
<comment type="function">
    <text evidence="1">Catalyzes the ATP-dependent amidation of deamido-NAD to form NAD. Uses ammonia as a nitrogen source.</text>
</comment>
<comment type="catalytic activity">
    <reaction evidence="1">
        <text>deamido-NAD(+) + NH4(+) + ATP = AMP + diphosphate + NAD(+) + H(+)</text>
        <dbReference type="Rhea" id="RHEA:21188"/>
        <dbReference type="ChEBI" id="CHEBI:15378"/>
        <dbReference type="ChEBI" id="CHEBI:28938"/>
        <dbReference type="ChEBI" id="CHEBI:30616"/>
        <dbReference type="ChEBI" id="CHEBI:33019"/>
        <dbReference type="ChEBI" id="CHEBI:57540"/>
        <dbReference type="ChEBI" id="CHEBI:58437"/>
        <dbReference type="ChEBI" id="CHEBI:456215"/>
        <dbReference type="EC" id="6.3.1.5"/>
    </reaction>
</comment>
<comment type="pathway">
    <text evidence="1">Cofactor biosynthesis; NAD(+) biosynthesis; NAD(+) from deamido-NAD(+) (ammonia route): step 1/1.</text>
</comment>
<comment type="subunit">
    <text evidence="1">Homodimer.</text>
</comment>
<comment type="similarity">
    <text evidence="1">Belongs to the NAD synthetase family.</text>
</comment>
<evidence type="ECO:0000255" key="1">
    <source>
        <dbReference type="HAMAP-Rule" id="MF_00193"/>
    </source>
</evidence>
<evidence type="ECO:0007744" key="2">
    <source>
        <dbReference type="PDB" id="3P52"/>
    </source>
</evidence>
<evidence type="ECO:0007829" key="3">
    <source>
        <dbReference type="PDB" id="3P52"/>
    </source>
</evidence>
<sequence length="246" mass="27463">MDWQKITEKMCDFIQEKVKNSQSQGVVLGLSGGIDSALVATLCKRALKENVFALLMPTQISNKANLEDALRLCADLNLEYKIIEIQSILDAFIKQSENTTLVSLGNFAARIRMSLLYDYSALKNSLVIGTSNKSELLLGYGTIYGDLACAFNPIGSLYKSEIYALAKYLNLHENFIKKAPSADLWENQSDEADLGFSYTKIDEGLKALETNDEKLLRTLDPSLIAMLKNRMQKNAFKGKMPEILEI</sequence>